<gene>
    <name evidence="1" type="primary">ruvA</name>
    <name type="ordered locus">CGSHiGG_04380</name>
</gene>
<evidence type="ECO:0000255" key="1">
    <source>
        <dbReference type="HAMAP-Rule" id="MF_00031"/>
    </source>
</evidence>
<reference key="1">
    <citation type="journal article" date="2007" name="Genome Biol.">
        <title>Characterization and modeling of the Haemophilus influenzae core and supragenomes based on the complete genomic sequences of Rd and 12 clinical nontypeable strains.</title>
        <authorList>
            <person name="Hogg J.S."/>
            <person name="Hu F.Z."/>
            <person name="Janto B."/>
            <person name="Boissy R."/>
            <person name="Hayes J."/>
            <person name="Keefe R."/>
            <person name="Post J.C."/>
            <person name="Ehrlich G.D."/>
        </authorList>
    </citation>
    <scope>NUCLEOTIDE SEQUENCE [LARGE SCALE GENOMIC DNA]</scope>
    <source>
        <strain>PittGG</strain>
    </source>
</reference>
<comment type="function">
    <text evidence="1">The RuvA-RuvB-RuvC complex processes Holliday junction (HJ) DNA during genetic recombination and DNA repair, while the RuvA-RuvB complex plays an important role in the rescue of blocked DNA replication forks via replication fork reversal (RFR). RuvA specifically binds to HJ cruciform DNA, conferring on it an open structure. The RuvB hexamer acts as an ATP-dependent pump, pulling dsDNA into and through the RuvAB complex. HJ branch migration allows RuvC to scan DNA until it finds its consensus sequence, where it cleaves and resolves the cruciform DNA.</text>
</comment>
<comment type="subunit">
    <text evidence="1">Homotetramer. Forms an RuvA(8)-RuvB(12)-Holliday junction (HJ) complex. HJ DNA is sandwiched between 2 RuvA tetramers; dsDNA enters through RuvA and exits via RuvB. An RuvB hexamer assembles on each DNA strand where it exits the tetramer. Each RuvB hexamer is contacted by two RuvA subunits (via domain III) on 2 adjacent RuvB subunits; this complex drives branch migration. In the full resolvosome a probable DNA-RuvA(4)-RuvB(12)-RuvC(2) complex forms which resolves the HJ.</text>
</comment>
<comment type="subcellular location">
    <subcellularLocation>
        <location evidence="1">Cytoplasm</location>
    </subcellularLocation>
</comment>
<comment type="domain">
    <text evidence="1">Has three domains with a flexible linker between the domains II and III and assumes an 'L' shape. Domain III is highly mobile and contacts RuvB.</text>
</comment>
<comment type="similarity">
    <text evidence="1">Belongs to the RuvA family.</text>
</comment>
<sequence length="204" mass="22547">MIGRLQGILLEKQPPEILLNVQGVGYELLLPMTSFYDLPEIGQETTLFTHLVVREDAHLLFGFAQKTDRTLFRELIKTNGVGPKLALAILSAMSVEQFAYAIEREELSKLTKIPGVGKKTAERLLVELKGKFKGVKQSDFFVESTHIPLSPSIESHSESSSDEAISALIALGYKPAEAEKMVKRVAKPELTSEQVIREALKAAL</sequence>
<keyword id="KW-0963">Cytoplasm</keyword>
<keyword id="KW-0227">DNA damage</keyword>
<keyword id="KW-0233">DNA recombination</keyword>
<keyword id="KW-0234">DNA repair</keyword>
<keyword id="KW-0238">DNA-binding</keyword>
<organism>
    <name type="scientific">Haemophilus influenzae (strain PittGG)</name>
    <dbReference type="NCBI Taxonomy" id="374931"/>
    <lineage>
        <taxon>Bacteria</taxon>
        <taxon>Pseudomonadati</taxon>
        <taxon>Pseudomonadota</taxon>
        <taxon>Gammaproteobacteria</taxon>
        <taxon>Pasteurellales</taxon>
        <taxon>Pasteurellaceae</taxon>
        <taxon>Haemophilus</taxon>
    </lineage>
</organism>
<proteinExistence type="inferred from homology"/>
<name>RUVA_HAEIG</name>
<protein>
    <recommendedName>
        <fullName evidence="1">Holliday junction branch migration complex subunit RuvA</fullName>
    </recommendedName>
</protein>
<dbReference type="EMBL" id="CP000672">
    <property type="protein sequence ID" value="ABQ99834.1"/>
    <property type="molecule type" value="Genomic_DNA"/>
</dbReference>
<dbReference type="SMR" id="A5UGC9"/>
<dbReference type="KEGG" id="hiq:CGSHiGG_04380"/>
<dbReference type="HOGENOM" id="CLU_087936_0_0_6"/>
<dbReference type="Proteomes" id="UP000001990">
    <property type="component" value="Chromosome"/>
</dbReference>
<dbReference type="GO" id="GO:0005737">
    <property type="term" value="C:cytoplasm"/>
    <property type="evidence" value="ECO:0007669"/>
    <property type="project" value="UniProtKB-SubCell"/>
</dbReference>
<dbReference type="GO" id="GO:0009379">
    <property type="term" value="C:Holliday junction helicase complex"/>
    <property type="evidence" value="ECO:0007669"/>
    <property type="project" value="InterPro"/>
</dbReference>
<dbReference type="GO" id="GO:0048476">
    <property type="term" value="C:Holliday junction resolvase complex"/>
    <property type="evidence" value="ECO:0007669"/>
    <property type="project" value="UniProtKB-UniRule"/>
</dbReference>
<dbReference type="GO" id="GO:0005524">
    <property type="term" value="F:ATP binding"/>
    <property type="evidence" value="ECO:0007669"/>
    <property type="project" value="InterPro"/>
</dbReference>
<dbReference type="GO" id="GO:0000400">
    <property type="term" value="F:four-way junction DNA binding"/>
    <property type="evidence" value="ECO:0007669"/>
    <property type="project" value="UniProtKB-UniRule"/>
</dbReference>
<dbReference type="GO" id="GO:0009378">
    <property type="term" value="F:four-way junction helicase activity"/>
    <property type="evidence" value="ECO:0007669"/>
    <property type="project" value="InterPro"/>
</dbReference>
<dbReference type="GO" id="GO:0006310">
    <property type="term" value="P:DNA recombination"/>
    <property type="evidence" value="ECO:0007669"/>
    <property type="project" value="UniProtKB-UniRule"/>
</dbReference>
<dbReference type="GO" id="GO:0006281">
    <property type="term" value="P:DNA repair"/>
    <property type="evidence" value="ECO:0007669"/>
    <property type="project" value="UniProtKB-UniRule"/>
</dbReference>
<dbReference type="CDD" id="cd14332">
    <property type="entry name" value="UBA_RuvA_C"/>
    <property type="match status" value="1"/>
</dbReference>
<dbReference type="FunFam" id="2.40.50.140:FF:000083">
    <property type="entry name" value="Holliday junction ATP-dependent DNA helicase RuvA"/>
    <property type="match status" value="1"/>
</dbReference>
<dbReference type="Gene3D" id="1.10.150.20">
    <property type="entry name" value="5' to 3' exonuclease, C-terminal subdomain"/>
    <property type="match status" value="1"/>
</dbReference>
<dbReference type="Gene3D" id="1.10.8.10">
    <property type="entry name" value="DNA helicase RuvA subunit, C-terminal domain"/>
    <property type="match status" value="1"/>
</dbReference>
<dbReference type="Gene3D" id="2.40.50.140">
    <property type="entry name" value="Nucleic acid-binding proteins"/>
    <property type="match status" value="1"/>
</dbReference>
<dbReference type="HAMAP" id="MF_00031">
    <property type="entry name" value="DNA_HJ_migration_RuvA"/>
    <property type="match status" value="1"/>
</dbReference>
<dbReference type="InterPro" id="IPR013849">
    <property type="entry name" value="DNA_helicase_Holl-junc_RuvA_I"/>
</dbReference>
<dbReference type="InterPro" id="IPR003583">
    <property type="entry name" value="Hlx-hairpin-Hlx_DNA-bd_motif"/>
</dbReference>
<dbReference type="InterPro" id="IPR012340">
    <property type="entry name" value="NA-bd_OB-fold"/>
</dbReference>
<dbReference type="InterPro" id="IPR000085">
    <property type="entry name" value="RuvA"/>
</dbReference>
<dbReference type="InterPro" id="IPR010994">
    <property type="entry name" value="RuvA_2-like"/>
</dbReference>
<dbReference type="InterPro" id="IPR011114">
    <property type="entry name" value="RuvA_C"/>
</dbReference>
<dbReference type="InterPro" id="IPR036267">
    <property type="entry name" value="RuvA_C_sf"/>
</dbReference>
<dbReference type="NCBIfam" id="TIGR00084">
    <property type="entry name" value="ruvA"/>
    <property type="match status" value="1"/>
</dbReference>
<dbReference type="Pfam" id="PF14520">
    <property type="entry name" value="HHH_5"/>
    <property type="match status" value="1"/>
</dbReference>
<dbReference type="Pfam" id="PF07499">
    <property type="entry name" value="RuvA_C"/>
    <property type="match status" value="1"/>
</dbReference>
<dbReference type="Pfam" id="PF01330">
    <property type="entry name" value="RuvA_N"/>
    <property type="match status" value="1"/>
</dbReference>
<dbReference type="SMART" id="SM00278">
    <property type="entry name" value="HhH1"/>
    <property type="match status" value="2"/>
</dbReference>
<dbReference type="SUPFAM" id="SSF46929">
    <property type="entry name" value="DNA helicase RuvA subunit, C-terminal domain"/>
    <property type="match status" value="1"/>
</dbReference>
<dbReference type="SUPFAM" id="SSF50249">
    <property type="entry name" value="Nucleic acid-binding proteins"/>
    <property type="match status" value="1"/>
</dbReference>
<dbReference type="SUPFAM" id="SSF47781">
    <property type="entry name" value="RuvA domain 2-like"/>
    <property type="match status" value="1"/>
</dbReference>
<feature type="chain" id="PRO_1000002458" description="Holliday junction branch migration complex subunit RuvA">
    <location>
        <begin position="1"/>
        <end position="204"/>
    </location>
</feature>
<feature type="region of interest" description="Domain I" evidence="1">
    <location>
        <begin position="1"/>
        <end position="64"/>
    </location>
</feature>
<feature type="region of interest" description="Domain II" evidence="1">
    <location>
        <begin position="65"/>
        <end position="143"/>
    </location>
</feature>
<feature type="region of interest" description="Flexible linker" evidence="1">
    <location>
        <begin position="144"/>
        <end position="155"/>
    </location>
</feature>
<feature type="region of interest" description="Domain III" evidence="1">
    <location>
        <begin position="156"/>
        <end position="204"/>
    </location>
</feature>
<accession>A5UGC9</accession>